<comment type="function">
    <text evidence="1">Catalyzes the deamination of dCTP to dUTP.</text>
</comment>
<comment type="catalytic activity">
    <reaction evidence="1">
        <text>dCTP + H2O + H(+) = dUTP + NH4(+)</text>
        <dbReference type="Rhea" id="RHEA:22680"/>
        <dbReference type="ChEBI" id="CHEBI:15377"/>
        <dbReference type="ChEBI" id="CHEBI:15378"/>
        <dbReference type="ChEBI" id="CHEBI:28938"/>
        <dbReference type="ChEBI" id="CHEBI:61481"/>
        <dbReference type="ChEBI" id="CHEBI:61555"/>
        <dbReference type="EC" id="3.5.4.13"/>
    </reaction>
</comment>
<comment type="pathway">
    <text evidence="1">Pyrimidine metabolism; dUMP biosynthesis; dUMP from dCTP (dUTP route): step 1/2.</text>
</comment>
<comment type="subunit">
    <text evidence="1">Homotrimer.</text>
</comment>
<comment type="similarity">
    <text evidence="1">Belongs to the dCTP deaminase family.</text>
</comment>
<proteinExistence type="inferred from homology"/>
<keyword id="KW-0378">Hydrolase</keyword>
<keyword id="KW-0546">Nucleotide metabolism</keyword>
<keyword id="KW-0547">Nucleotide-binding</keyword>
<gene>
    <name evidence="1" type="primary">dcd</name>
    <name type="ordered locus">CTL0294</name>
</gene>
<dbReference type="EC" id="3.5.4.13" evidence="1"/>
<dbReference type="EMBL" id="AM884176">
    <property type="protein sequence ID" value="CAP03733.1"/>
    <property type="molecule type" value="Genomic_DNA"/>
</dbReference>
<dbReference type="RefSeq" id="WP_009873511.1">
    <property type="nucleotide sequence ID" value="NC_010287.1"/>
</dbReference>
<dbReference type="RefSeq" id="YP_001654377.1">
    <property type="nucleotide sequence ID" value="NC_010287.1"/>
</dbReference>
<dbReference type="SMR" id="B0B9E6"/>
<dbReference type="KEGG" id="ctb:CTL0294"/>
<dbReference type="PATRIC" id="fig|471472.4.peg.318"/>
<dbReference type="HOGENOM" id="CLU_087476_4_0_0"/>
<dbReference type="UniPathway" id="UPA00610">
    <property type="reaction ID" value="UER00665"/>
</dbReference>
<dbReference type="Proteomes" id="UP001154402">
    <property type="component" value="Chromosome"/>
</dbReference>
<dbReference type="GO" id="GO:0008829">
    <property type="term" value="F:dCTP deaminase activity"/>
    <property type="evidence" value="ECO:0007669"/>
    <property type="project" value="UniProtKB-UniRule"/>
</dbReference>
<dbReference type="GO" id="GO:0000166">
    <property type="term" value="F:nucleotide binding"/>
    <property type="evidence" value="ECO:0007669"/>
    <property type="project" value="UniProtKB-KW"/>
</dbReference>
<dbReference type="GO" id="GO:0006226">
    <property type="term" value="P:dUMP biosynthetic process"/>
    <property type="evidence" value="ECO:0007669"/>
    <property type="project" value="UniProtKB-UniPathway"/>
</dbReference>
<dbReference type="GO" id="GO:0006229">
    <property type="term" value="P:dUTP biosynthetic process"/>
    <property type="evidence" value="ECO:0007669"/>
    <property type="project" value="UniProtKB-UniRule"/>
</dbReference>
<dbReference type="GO" id="GO:0015949">
    <property type="term" value="P:nucleobase-containing small molecule interconversion"/>
    <property type="evidence" value="ECO:0007669"/>
    <property type="project" value="TreeGrafter"/>
</dbReference>
<dbReference type="CDD" id="cd07557">
    <property type="entry name" value="trimeric_dUTPase"/>
    <property type="match status" value="1"/>
</dbReference>
<dbReference type="FunFam" id="2.70.40.10:FF:000001">
    <property type="entry name" value="dCTP deaminase"/>
    <property type="match status" value="1"/>
</dbReference>
<dbReference type="Gene3D" id="2.70.40.10">
    <property type="match status" value="1"/>
</dbReference>
<dbReference type="HAMAP" id="MF_00146">
    <property type="entry name" value="dCTP_deaminase"/>
    <property type="match status" value="1"/>
</dbReference>
<dbReference type="InterPro" id="IPR011962">
    <property type="entry name" value="dCTP_deaminase"/>
</dbReference>
<dbReference type="InterPro" id="IPR036157">
    <property type="entry name" value="dUTPase-like_sf"/>
</dbReference>
<dbReference type="InterPro" id="IPR033704">
    <property type="entry name" value="dUTPase_trimeric"/>
</dbReference>
<dbReference type="NCBIfam" id="TIGR02274">
    <property type="entry name" value="dCTP_deam"/>
    <property type="match status" value="1"/>
</dbReference>
<dbReference type="PANTHER" id="PTHR42680">
    <property type="entry name" value="DCTP DEAMINASE"/>
    <property type="match status" value="1"/>
</dbReference>
<dbReference type="PANTHER" id="PTHR42680:SF3">
    <property type="entry name" value="DCTP DEAMINASE"/>
    <property type="match status" value="1"/>
</dbReference>
<dbReference type="Pfam" id="PF22769">
    <property type="entry name" value="DCD"/>
    <property type="match status" value="1"/>
</dbReference>
<dbReference type="SUPFAM" id="SSF51283">
    <property type="entry name" value="dUTPase-like"/>
    <property type="match status" value="1"/>
</dbReference>
<name>DCD_CHLT2</name>
<accession>B0B9E6</accession>
<protein>
    <recommendedName>
        <fullName evidence="1">dCTP deaminase</fullName>
        <ecNumber evidence="1">3.5.4.13</ecNumber>
    </recommendedName>
    <alternativeName>
        <fullName evidence="1">Deoxycytidine triphosphate deaminase</fullName>
    </alternativeName>
</protein>
<evidence type="ECO:0000255" key="1">
    <source>
        <dbReference type="HAMAP-Rule" id="MF_00146"/>
    </source>
</evidence>
<organism>
    <name type="scientific">Chlamydia trachomatis serovar L2 (strain ATCC VR-902B / DSM 19102 / 434/Bu)</name>
    <dbReference type="NCBI Taxonomy" id="471472"/>
    <lineage>
        <taxon>Bacteria</taxon>
        <taxon>Pseudomonadati</taxon>
        <taxon>Chlamydiota</taxon>
        <taxon>Chlamydiia</taxon>
        <taxon>Chlamydiales</taxon>
        <taxon>Chlamydiaceae</taxon>
        <taxon>Chlamydia/Chlamydophila group</taxon>
        <taxon>Chlamydia</taxon>
    </lineage>
</organism>
<feature type="chain" id="PRO_1000096415" description="dCTP deaminase">
    <location>
        <begin position="1"/>
        <end position="190"/>
    </location>
</feature>
<feature type="active site" description="Proton donor/acceptor" evidence="1">
    <location>
        <position position="139"/>
    </location>
</feature>
<feature type="binding site" evidence="1">
    <location>
        <begin position="113"/>
        <end position="118"/>
    </location>
    <ligand>
        <name>dCTP</name>
        <dbReference type="ChEBI" id="CHEBI:61481"/>
    </ligand>
</feature>
<feature type="binding site" evidence="1">
    <location>
        <position position="158"/>
    </location>
    <ligand>
        <name>dCTP</name>
        <dbReference type="ChEBI" id="CHEBI:61481"/>
    </ligand>
</feature>
<feature type="binding site" evidence="1">
    <location>
        <position position="172"/>
    </location>
    <ligand>
        <name>dCTP</name>
        <dbReference type="ChEBI" id="CHEBI:61481"/>
    </ligand>
</feature>
<feature type="binding site" evidence="1">
    <location>
        <position position="181"/>
    </location>
    <ligand>
        <name>dCTP</name>
        <dbReference type="ChEBI" id="CHEBI:61481"/>
    </ligand>
</feature>
<feature type="binding site" evidence="1">
    <location>
        <position position="182"/>
    </location>
    <ligand>
        <name>dCTP</name>
        <dbReference type="ChEBI" id="CHEBI:61481"/>
    </ligand>
</feature>
<reference key="1">
    <citation type="journal article" date="2008" name="Genome Res.">
        <title>Chlamydia trachomatis: genome sequence analysis of lymphogranuloma venereum isolates.</title>
        <authorList>
            <person name="Thomson N.R."/>
            <person name="Holden M.T.G."/>
            <person name="Carder C."/>
            <person name="Lennard N."/>
            <person name="Lockey S.J."/>
            <person name="Marsh P."/>
            <person name="Skipp P."/>
            <person name="O'Connor C.D."/>
            <person name="Goodhead I."/>
            <person name="Norbertzcak H."/>
            <person name="Harris B."/>
            <person name="Ormond D."/>
            <person name="Rance R."/>
            <person name="Quail M.A."/>
            <person name="Parkhill J."/>
            <person name="Stephens R.S."/>
            <person name="Clarke I.N."/>
        </authorList>
    </citation>
    <scope>NUCLEOTIDE SEQUENCE [LARGE SCALE GENOMIC DNA]</scope>
    <source>
        <strain>ATCC VR-902B / DSM 19102 / 434/Bu</strain>
    </source>
</reference>
<sequence length="190" mass="21384">MGIKEDNWIRKMAIEEGMIEPFADSQVKLHPETGEKLISYGLSSYGYDLRISREFKVFTNVYNSLVDPKCFTEDALISIVDDVCIIPPNSFALARSVEYFRIPRNVLTVCIGKSTYARCGLIVNVTPFEPEWEGYVTIEISNTTPLPAKVYANEGIAQVLFFEGDAACDVSYAERQGKYQKQQGITIPFV</sequence>